<feature type="chain" id="PRO_0000123071" description="7-methyl-GTP pyrophosphatase">
    <location>
        <begin position="1"/>
        <end position="193"/>
    </location>
</feature>
<feature type="active site" description="Proton acceptor" evidence="1">
    <location>
        <position position="70"/>
    </location>
</feature>
<feature type="site" description="Important for substrate specificity" evidence="1">
    <location>
        <position position="14"/>
    </location>
</feature>
<feature type="site" description="Important for substrate specificity" evidence="1">
    <location>
        <position position="71"/>
    </location>
</feature>
<feature type="site" description="Important for substrate specificity" evidence="1">
    <location>
        <position position="155"/>
    </location>
</feature>
<organism>
    <name type="scientific">Vibrio parahaemolyticus serotype O3:K6 (strain RIMD 2210633)</name>
    <dbReference type="NCBI Taxonomy" id="223926"/>
    <lineage>
        <taxon>Bacteria</taxon>
        <taxon>Pseudomonadati</taxon>
        <taxon>Pseudomonadota</taxon>
        <taxon>Gammaproteobacteria</taxon>
        <taxon>Vibrionales</taxon>
        <taxon>Vibrionaceae</taxon>
        <taxon>Vibrio</taxon>
    </lineage>
</organism>
<comment type="function">
    <text evidence="1">Nucleoside triphosphate pyrophosphatase that hydrolyzes 7-methyl-GTP (m(7)GTP). May have a dual role in cell division arrest and in preventing the incorporation of modified nucleotides into cellular nucleic acids.</text>
</comment>
<comment type="catalytic activity">
    <reaction evidence="1">
        <text>N(7)-methyl-GTP + H2O = N(7)-methyl-GMP + diphosphate + H(+)</text>
        <dbReference type="Rhea" id="RHEA:58744"/>
        <dbReference type="ChEBI" id="CHEBI:15377"/>
        <dbReference type="ChEBI" id="CHEBI:15378"/>
        <dbReference type="ChEBI" id="CHEBI:33019"/>
        <dbReference type="ChEBI" id="CHEBI:58285"/>
        <dbReference type="ChEBI" id="CHEBI:87133"/>
    </reaction>
</comment>
<comment type="cofactor">
    <cofactor evidence="1">
        <name>a divalent metal cation</name>
        <dbReference type="ChEBI" id="CHEBI:60240"/>
    </cofactor>
</comment>
<comment type="subcellular location">
    <subcellularLocation>
        <location evidence="1">Cytoplasm</location>
    </subcellularLocation>
</comment>
<comment type="similarity">
    <text evidence="1">Belongs to the Maf family. YceF subfamily.</text>
</comment>
<sequence length="193" mass="21545">MKNYQLVLASTSPFRQQLLEKLSVPFICLSPDCDETPYESEAPLDLVQRLAVNKATSCSIKKPSLVIGSDQVCVIDGKIVGKPLNRENAINQLLAQSGKAITFYTGLAVYNSVTNLTEVGYDTFEVHFRNLNREQIERYVDREEPFYCAGSFKSEGMGICLFEKLVGKDPNTLVGLPLIDLIDMLQKQGFEIL</sequence>
<protein>
    <recommendedName>
        <fullName evidence="1">7-methyl-GTP pyrophosphatase</fullName>
        <shortName evidence="1">m(7)GTP pyrophosphatase</shortName>
        <ecNumber evidence="1">3.6.1.-</ecNumber>
    </recommendedName>
</protein>
<dbReference type="EC" id="3.6.1.-" evidence="1"/>
<dbReference type="EMBL" id="BA000031">
    <property type="protein sequence ID" value="BAC60323.1"/>
    <property type="molecule type" value="Genomic_DNA"/>
</dbReference>
<dbReference type="RefSeq" id="NP_798439.1">
    <property type="nucleotide sequence ID" value="NC_004603.1"/>
</dbReference>
<dbReference type="RefSeq" id="WP_005461585.1">
    <property type="nucleotide sequence ID" value="NC_004603.1"/>
</dbReference>
<dbReference type="SMR" id="Q87N16"/>
<dbReference type="GeneID" id="1189571"/>
<dbReference type="KEGG" id="vpa:VP2060"/>
<dbReference type="PATRIC" id="fig|223926.6.peg.1970"/>
<dbReference type="eggNOG" id="COG0424">
    <property type="taxonomic scope" value="Bacteria"/>
</dbReference>
<dbReference type="HOGENOM" id="CLU_040416_1_0_6"/>
<dbReference type="Proteomes" id="UP000002493">
    <property type="component" value="Chromosome 1"/>
</dbReference>
<dbReference type="GO" id="GO:0005737">
    <property type="term" value="C:cytoplasm"/>
    <property type="evidence" value="ECO:0007669"/>
    <property type="project" value="UniProtKB-SubCell"/>
</dbReference>
<dbReference type="GO" id="GO:0047429">
    <property type="term" value="F:nucleoside triphosphate diphosphatase activity"/>
    <property type="evidence" value="ECO:0007669"/>
    <property type="project" value="InterPro"/>
</dbReference>
<dbReference type="GO" id="GO:0009117">
    <property type="term" value="P:nucleotide metabolic process"/>
    <property type="evidence" value="ECO:0007669"/>
    <property type="project" value="UniProtKB-KW"/>
</dbReference>
<dbReference type="CDD" id="cd00555">
    <property type="entry name" value="Maf"/>
    <property type="match status" value="1"/>
</dbReference>
<dbReference type="FunFam" id="3.90.950.10:FF:000005">
    <property type="entry name" value="7-methyl-GTP pyrophosphatase"/>
    <property type="match status" value="1"/>
</dbReference>
<dbReference type="Gene3D" id="3.90.950.10">
    <property type="match status" value="1"/>
</dbReference>
<dbReference type="HAMAP" id="MF_00528">
    <property type="entry name" value="Maf"/>
    <property type="match status" value="1"/>
</dbReference>
<dbReference type="InterPro" id="IPR029001">
    <property type="entry name" value="ITPase-like_fam"/>
</dbReference>
<dbReference type="InterPro" id="IPR003697">
    <property type="entry name" value="Maf-like"/>
</dbReference>
<dbReference type="NCBIfam" id="TIGR00172">
    <property type="entry name" value="maf"/>
    <property type="match status" value="1"/>
</dbReference>
<dbReference type="PANTHER" id="PTHR43213:SF10">
    <property type="entry name" value="7-METHYL-GTP PYROPHOSPHATASE"/>
    <property type="match status" value="1"/>
</dbReference>
<dbReference type="PANTHER" id="PTHR43213">
    <property type="entry name" value="BIFUNCTIONAL DTTP/UTP PYROPHOSPHATASE/METHYLTRANSFERASE PROTEIN-RELATED"/>
    <property type="match status" value="1"/>
</dbReference>
<dbReference type="Pfam" id="PF02545">
    <property type="entry name" value="Maf"/>
    <property type="match status" value="1"/>
</dbReference>
<dbReference type="PIRSF" id="PIRSF006305">
    <property type="entry name" value="Maf"/>
    <property type="match status" value="1"/>
</dbReference>
<dbReference type="SUPFAM" id="SSF52972">
    <property type="entry name" value="ITPase-like"/>
    <property type="match status" value="1"/>
</dbReference>
<proteinExistence type="inferred from homology"/>
<keyword id="KW-0963">Cytoplasm</keyword>
<keyword id="KW-0378">Hydrolase</keyword>
<keyword id="KW-0546">Nucleotide metabolism</keyword>
<name>NTPPB_VIBPA</name>
<evidence type="ECO:0000255" key="1">
    <source>
        <dbReference type="HAMAP-Rule" id="MF_00528"/>
    </source>
</evidence>
<gene>
    <name type="ordered locus">VP2060</name>
</gene>
<accession>Q87N16</accession>
<reference key="1">
    <citation type="journal article" date="2003" name="Lancet">
        <title>Genome sequence of Vibrio parahaemolyticus: a pathogenic mechanism distinct from that of V. cholerae.</title>
        <authorList>
            <person name="Makino K."/>
            <person name="Oshima K."/>
            <person name="Kurokawa K."/>
            <person name="Yokoyama K."/>
            <person name="Uda T."/>
            <person name="Tagomori K."/>
            <person name="Iijima Y."/>
            <person name="Najima M."/>
            <person name="Nakano M."/>
            <person name="Yamashita A."/>
            <person name="Kubota Y."/>
            <person name="Kimura S."/>
            <person name="Yasunaga T."/>
            <person name="Honda T."/>
            <person name="Shinagawa H."/>
            <person name="Hattori M."/>
            <person name="Iida T."/>
        </authorList>
    </citation>
    <scope>NUCLEOTIDE SEQUENCE [LARGE SCALE GENOMIC DNA]</scope>
    <source>
        <strain>RIMD 2210633</strain>
    </source>
</reference>